<evidence type="ECO:0000250" key="1"/>
<evidence type="ECO:0000250" key="2">
    <source>
        <dbReference type="UniProtKB" id="Q8VD46"/>
    </source>
</evidence>
<evidence type="ECO:0000255" key="3">
    <source>
        <dbReference type="PROSITE-ProRule" id="PRU00184"/>
    </source>
</evidence>
<evidence type="ECO:0000256" key="4">
    <source>
        <dbReference type="SAM" id="MobiDB-lite"/>
    </source>
</evidence>
<reference key="1">
    <citation type="submission" date="2006-09" db="EMBL/GenBank/DDBJ databases">
        <title>NISC comparative sequencing initiative.</title>
        <authorList>
            <person name="Antonellis A."/>
            <person name="Ayele K."/>
            <person name="Benjamin B."/>
            <person name="Blakesley R.W."/>
            <person name="Boakye A."/>
            <person name="Bouffard G.G."/>
            <person name="Brinkley C."/>
            <person name="Brooks S."/>
            <person name="Chu G."/>
            <person name="Coleman H."/>
            <person name="Engle J."/>
            <person name="Gestole M."/>
            <person name="Greene A."/>
            <person name="Guan X."/>
            <person name="Gupta J."/>
            <person name="Haghighi P."/>
            <person name="Han J."/>
            <person name="Hansen N."/>
            <person name="Ho S.-L."/>
            <person name="Hu P."/>
            <person name="Hunter G."/>
            <person name="Hurle B."/>
            <person name="Idol J.R."/>
            <person name="Kwong P."/>
            <person name="Laric P."/>
            <person name="Larson S."/>
            <person name="Lee-Lin S.-Q."/>
            <person name="Legaspi R."/>
            <person name="Madden M."/>
            <person name="Maduro Q.L."/>
            <person name="Maduro V.B."/>
            <person name="Margulies E.H."/>
            <person name="Masiello C."/>
            <person name="Maskeri B."/>
            <person name="McDowell J."/>
            <person name="Mojidi H.A."/>
            <person name="Mullikin J.C."/>
            <person name="Oestreicher J.S."/>
            <person name="Park M."/>
            <person name="Portnoy M.E."/>
            <person name="Prasad A."/>
            <person name="Puri O."/>
            <person name="Reddix-Dugue N."/>
            <person name="Schandler K."/>
            <person name="Schueler M.G."/>
            <person name="Sison C."/>
            <person name="Stantripop S."/>
            <person name="Stephen E."/>
            <person name="Taye A."/>
            <person name="Thomas J.W."/>
            <person name="Thomas P.J."/>
            <person name="Tsipouri V."/>
            <person name="Ung L."/>
            <person name="Vogt J.L."/>
            <person name="Wetherby K.D."/>
            <person name="Young A."/>
            <person name="Green E.D."/>
        </authorList>
    </citation>
    <scope>NUCLEOTIDE SEQUENCE [LARGE SCALE GENOMIC DNA]</scope>
</reference>
<gene>
    <name type="primary">ASZ1</name>
    <name type="synonym">GASZ</name>
</gene>
<feature type="chain" id="PRO_0000260395" description="Ankyrin repeat, SAM and basic leucine zipper domain-containing protein 1">
    <location>
        <begin position="1"/>
        <end position="474"/>
    </location>
</feature>
<feature type="repeat" description="ANK 1">
    <location>
        <begin position="43"/>
        <end position="72"/>
    </location>
</feature>
<feature type="repeat" description="ANK 2">
    <location>
        <begin position="76"/>
        <end position="105"/>
    </location>
</feature>
<feature type="repeat" description="ANK 3">
    <location>
        <begin position="108"/>
        <end position="142"/>
    </location>
</feature>
<feature type="repeat" description="ANK 4">
    <location>
        <begin position="146"/>
        <end position="175"/>
    </location>
</feature>
<feature type="repeat" description="ANK 5">
    <location>
        <begin position="179"/>
        <end position="208"/>
    </location>
</feature>
<feature type="repeat" description="ANK 6">
    <location>
        <begin position="212"/>
        <end position="241"/>
    </location>
</feature>
<feature type="domain" description="SAM" evidence="3">
    <location>
        <begin position="270"/>
        <end position="333"/>
    </location>
</feature>
<feature type="region of interest" description="Disordered" evidence="4">
    <location>
        <begin position="1"/>
        <end position="31"/>
    </location>
</feature>
<feature type="modified residue" description="Phosphoserine" evidence="2">
    <location>
        <position position="16"/>
    </location>
</feature>
<feature type="modified residue" description="Phosphoserine" evidence="2">
    <location>
        <position position="17"/>
    </location>
</feature>
<feature type="modified residue" description="Phosphoserine" evidence="2">
    <location>
        <position position="19"/>
    </location>
</feature>
<protein>
    <recommendedName>
        <fullName>Ankyrin repeat, SAM and basic leucine zipper domain-containing protein 1</fullName>
    </recommendedName>
    <alternativeName>
        <fullName>Germ cell-specific ankyrin, SAM and basic leucine zipper domain-containing protein</fullName>
    </alternativeName>
</protein>
<accession>Q07DZ7</accession>
<name>ASZ1_ORNAN</name>
<proteinExistence type="inferred from homology"/>
<sequence length="474" mass="53019">MAGRLRGPAVPGGGESSDSDEDGWDIGYTERPDKLKDSLLSEEKDEVLKRALTTGDGSLLEELLNSGMQVDSSFRFGWTPLMYAASIANVDLVRILLDRGANASFSKDQHTVLMAACSARVPEERILKTAELLLSRNASPNATCRKRMSPLMYAAREGHSQLVALLVGHGAEINAQDDNGYTALAWAARHGHKTTVLKLLELGADKTLQTQDGKTPAEIAKRNKHPELFSMLSLTLNPLHGKFQNITKEENICKFLITDSEKSRDHGFSSYSAFGDLEIFLHGLQLEHLTELLKERDITLRQLLTLRKDDFTKIGITNVRDQKKIMDAVEELQVEEIKFEELPEVMKLEFSGDEFLNFLLKLSKQCGHLTTAVQDIISQFPVHSHKIVLEWGSPECFTSVCEDLVHNAQNLGEEVGKLKHLIQKLHNDQKNDSCRIPPMENVSTGKKRLWKRAAVTVCGFGLLFIVCKLTFLRK</sequence>
<comment type="function">
    <text evidence="1">Plays a central role during spermatogenesis by repressing transposable elements and preventing their mobilization, which is essential for the germline integrity. Acts via the piRNA metabolic process, which mediates the repression of transposable elements during meiosis by forming complexes composed of piRNAs and Piwi proteins and governs the methylation and subsequent repression of transposons. Its association with pi-bodies suggests a participation in the primary piRNAs metabolic process. Required prior to the pachytene stage to facilitate the production of multiple types of piRNAs, including those associated with repeats involved in the regulation of retrotransposons. May act by mediating protein-protein interactions during germ cell maturation (By similarity).</text>
</comment>
<comment type="subunit">
    <text evidence="1">Interacts with DDX4, PIWIL1, RANBP9 and TDRD1.</text>
</comment>
<comment type="subcellular location">
    <subcellularLocation>
        <location evidence="1">Cytoplasm</location>
    </subcellularLocation>
    <text evidence="1">Component of the meiotic nuage, also named P granule, a germ-cell-specific organelle required to repress transposon activity during meiosis. Specifically localizes to pi-bodies, a subset of the nuage which contains primary piRNAs (By similarity).</text>
</comment>
<keyword id="KW-0040">ANK repeat</keyword>
<keyword id="KW-0963">Cytoplasm</keyword>
<keyword id="KW-0217">Developmental protein</keyword>
<keyword id="KW-0221">Differentiation</keyword>
<keyword id="KW-0469">Meiosis</keyword>
<keyword id="KW-0597">Phosphoprotein</keyword>
<keyword id="KW-1185">Reference proteome</keyword>
<keyword id="KW-0677">Repeat</keyword>
<keyword id="KW-0943">RNA-mediated gene silencing</keyword>
<keyword id="KW-0744">Spermatogenesis</keyword>
<organism>
    <name type="scientific">Ornithorhynchus anatinus</name>
    <name type="common">Duckbill platypus</name>
    <dbReference type="NCBI Taxonomy" id="9258"/>
    <lineage>
        <taxon>Eukaryota</taxon>
        <taxon>Metazoa</taxon>
        <taxon>Chordata</taxon>
        <taxon>Craniata</taxon>
        <taxon>Vertebrata</taxon>
        <taxon>Euteleostomi</taxon>
        <taxon>Mammalia</taxon>
        <taxon>Monotremata</taxon>
        <taxon>Ornithorhynchidae</taxon>
        <taxon>Ornithorhynchus</taxon>
    </lineage>
</organism>
<dbReference type="EMBL" id="DP000185">
    <property type="protein sequence ID" value="ABI93679.1"/>
    <property type="molecule type" value="Genomic_DNA"/>
</dbReference>
<dbReference type="RefSeq" id="XP_028928603.1">
    <property type="nucleotide sequence ID" value="XM_029072770.2"/>
</dbReference>
<dbReference type="SMR" id="Q07DZ7"/>
<dbReference type="FunCoup" id="Q07DZ7">
    <property type="interactions" value="18"/>
</dbReference>
<dbReference type="STRING" id="9258.ENSOANP00000030233"/>
<dbReference type="Ensembl" id="ENSOANT00000039557.2">
    <property type="protein sequence ID" value="ENSOANP00000030318.2"/>
    <property type="gene ID" value="ENSOANG00000031342.2"/>
</dbReference>
<dbReference type="GeneID" id="100078950"/>
<dbReference type="eggNOG" id="KOG0504">
    <property type="taxonomic scope" value="Eukaryota"/>
</dbReference>
<dbReference type="GeneTree" id="ENSGT00880000138051"/>
<dbReference type="InParanoid" id="Q07DZ7"/>
<dbReference type="OMA" id="PFMFACR"/>
<dbReference type="OrthoDB" id="439236at2759"/>
<dbReference type="Proteomes" id="UP000002279">
    <property type="component" value="Chromosome 10"/>
</dbReference>
<dbReference type="Bgee" id="ENSOANG00000031342">
    <property type="expression patterns" value="Expressed in testis and 5 other cell types or tissues"/>
</dbReference>
<dbReference type="GO" id="GO:0071546">
    <property type="term" value="C:pi-body"/>
    <property type="evidence" value="ECO:0000250"/>
    <property type="project" value="UniProtKB"/>
</dbReference>
<dbReference type="GO" id="GO:0030154">
    <property type="term" value="P:cell differentiation"/>
    <property type="evidence" value="ECO:0007669"/>
    <property type="project" value="UniProtKB-KW"/>
</dbReference>
<dbReference type="GO" id="GO:0007140">
    <property type="term" value="P:male meiotic nuclear division"/>
    <property type="evidence" value="ECO:0000250"/>
    <property type="project" value="UniProtKB"/>
</dbReference>
<dbReference type="GO" id="GO:0031047">
    <property type="term" value="P:regulatory ncRNA-mediated gene silencing"/>
    <property type="evidence" value="ECO:0007669"/>
    <property type="project" value="UniProtKB-KW"/>
</dbReference>
<dbReference type="GO" id="GO:0007283">
    <property type="term" value="P:spermatogenesis"/>
    <property type="evidence" value="ECO:0000250"/>
    <property type="project" value="UniProtKB"/>
</dbReference>
<dbReference type="GO" id="GO:0010526">
    <property type="term" value="P:transposable element silencing"/>
    <property type="evidence" value="ECO:0000250"/>
    <property type="project" value="UniProtKB"/>
</dbReference>
<dbReference type="CDD" id="cd09521">
    <property type="entry name" value="SAM_ASZ1"/>
    <property type="match status" value="1"/>
</dbReference>
<dbReference type="FunFam" id="1.25.40.20:FF:000192">
    <property type="entry name" value="Ankyrin repeat, SAM and basic leucine zipper domain-containing 1"/>
    <property type="match status" value="1"/>
</dbReference>
<dbReference type="FunFam" id="1.10.150.50:FF:000060">
    <property type="entry name" value="Ankyrin repeat, SAM and basic leucine zipper domain-containing protein 1"/>
    <property type="match status" value="1"/>
</dbReference>
<dbReference type="Gene3D" id="1.25.40.20">
    <property type="entry name" value="Ankyrin repeat-containing domain"/>
    <property type="match status" value="1"/>
</dbReference>
<dbReference type="Gene3D" id="1.10.150.50">
    <property type="entry name" value="Transcription Factor, Ets-1"/>
    <property type="match status" value="1"/>
</dbReference>
<dbReference type="InterPro" id="IPR002110">
    <property type="entry name" value="Ankyrin_rpt"/>
</dbReference>
<dbReference type="InterPro" id="IPR036770">
    <property type="entry name" value="Ankyrin_rpt-contain_sf"/>
</dbReference>
<dbReference type="InterPro" id="IPR042650">
    <property type="entry name" value="Asz1_SAM"/>
</dbReference>
<dbReference type="InterPro" id="IPR001660">
    <property type="entry name" value="SAM"/>
</dbReference>
<dbReference type="InterPro" id="IPR013761">
    <property type="entry name" value="SAM/pointed_sf"/>
</dbReference>
<dbReference type="PANTHER" id="PTHR24157">
    <property type="entry name" value="ANKYRIN REPEAT, SAM AND BASIC LEUCINE ZIPPER DOMAIN-CONTAINING PROTEIN 1"/>
    <property type="match status" value="1"/>
</dbReference>
<dbReference type="PANTHER" id="PTHR24157:SF3">
    <property type="entry name" value="ANKYRIN REPEAT, SAM AND BASIC LEUCINE ZIPPER DOMAIN-CONTAINING PROTEIN 1"/>
    <property type="match status" value="1"/>
</dbReference>
<dbReference type="Pfam" id="PF00023">
    <property type="entry name" value="Ank"/>
    <property type="match status" value="1"/>
</dbReference>
<dbReference type="Pfam" id="PF12796">
    <property type="entry name" value="Ank_2"/>
    <property type="match status" value="1"/>
</dbReference>
<dbReference type="Pfam" id="PF07647">
    <property type="entry name" value="SAM_2"/>
    <property type="match status" value="1"/>
</dbReference>
<dbReference type="PRINTS" id="PR01415">
    <property type="entry name" value="ANKYRIN"/>
</dbReference>
<dbReference type="SMART" id="SM00248">
    <property type="entry name" value="ANK"/>
    <property type="match status" value="5"/>
</dbReference>
<dbReference type="SMART" id="SM00454">
    <property type="entry name" value="SAM"/>
    <property type="match status" value="1"/>
</dbReference>
<dbReference type="SUPFAM" id="SSF48403">
    <property type="entry name" value="Ankyrin repeat"/>
    <property type="match status" value="1"/>
</dbReference>
<dbReference type="SUPFAM" id="SSF47769">
    <property type="entry name" value="SAM/Pointed domain"/>
    <property type="match status" value="1"/>
</dbReference>
<dbReference type="PROSITE" id="PS50297">
    <property type="entry name" value="ANK_REP_REGION"/>
    <property type="match status" value="1"/>
</dbReference>
<dbReference type="PROSITE" id="PS50088">
    <property type="entry name" value="ANK_REPEAT"/>
    <property type="match status" value="3"/>
</dbReference>
<dbReference type="PROSITE" id="PS50105">
    <property type="entry name" value="SAM_DOMAIN"/>
    <property type="match status" value="1"/>
</dbReference>